<organism>
    <name type="scientific">Ictidomys tridecemlineatus</name>
    <name type="common">Thirteen-lined ground squirrel</name>
    <name type="synonym">Spermophilus tridecemlineatus</name>
    <dbReference type="NCBI Taxonomy" id="43179"/>
    <lineage>
        <taxon>Eukaryota</taxon>
        <taxon>Metazoa</taxon>
        <taxon>Chordata</taxon>
        <taxon>Craniata</taxon>
        <taxon>Vertebrata</taxon>
        <taxon>Euteleostomi</taxon>
        <taxon>Mammalia</taxon>
        <taxon>Eutheria</taxon>
        <taxon>Euarchontoglires</taxon>
        <taxon>Glires</taxon>
        <taxon>Rodentia</taxon>
        <taxon>Sciuromorpha</taxon>
        <taxon>Sciuridae</taxon>
        <taxon>Xerinae</taxon>
        <taxon>Marmotini</taxon>
        <taxon>Ictidomys</taxon>
    </lineage>
</organism>
<comment type="function">
    <text evidence="2 3 4 5">Transcription factor that is the main target of insulin signaling and regulates metabolic homeostasis in response to oxidative stress. Binds to the insulin response element (IRE) with consensus sequence 5'-TT[G/A]TTTTG-3' and the related Daf-16 family binding element (DBE) with consensus sequence 5'-TT[G/A]TTTAC-3'. Activity suppressed by insulin. Main regulator of redox balance and osteoblast numbers and controls bone mass. Orchestrates the endocrine function of the skeleton in regulating glucose metabolism. Also acts as a key regulator of chondrogenic commitment of skeletal progenitor cells in response to lipid availability: when lipids levels are low, translocates to the nucleus and promotes expression of SOX9, which induces chondrogenic commitment and suppresses fatty acid oxidation. Acts synergistically with ATF4 to suppress osteocalcin/BGLAP activity, increasing glucose levels and triggering glucose intolerance and insulin insensitivity. Also suppresses the transcriptional activity of RUNX2, an upstream activator of osteocalcin/BGLAP. Acts as an inhibitor of glucose sensing in pancreatic beta cells by acting as a transcription repressor and suppressing expression of PDX1. In hepatocytes, promotes gluconeogenesis by acting together with PPARGC1A and CEBPA to activate the expression of genes such as IGFBP1, G6PC1 and PCK1 (By similarity). Also promotes gluconeogenesis by directly promoting expression of PPARGC1A and G6PC1 (By similarity). Important regulator of cell death acting downstream of CDK1, PKB/AKT1 and STK4/MST1 (By similarity). Promotes neural cell death (By similarity). Mediates insulin action on adipose tissue (By similarity). Regulates the expression of adipogenic genes such as PPARG during preadipocyte differentiation and, adipocyte size and adipose tissue-specific gene expression in response to excessive calorie intake (By similarity). Regulates the transcriptional activity of GADD45A and repair of nitric oxide-damaged DNA in beta-cells (By similarity). Required for the autophagic cell death induction in response to starvation or oxidative stress in a transcription-independent manner (By similarity). Mediates the function of MLIP in cardiomyocytes hypertrophy and cardiac remodeling (By similarity). Positive regulator of apoptosis in cardiac smooth muscle cells as a result of its transcriptional activation of pro-apoptotic genes (By similarity). Regulates endothelial cell (EC) viability and apoptosis in a PPIA/CYPA-dependent manner via transcription of CCL2 and BCL2L11 which are involved in EC chemotaxis and apoptosis (By similarity).</text>
</comment>
<comment type="subunit">
    <text evidence="4 5">Interacts with LRPPRC. Interacts with RUNX2; the interaction inhibits RUNX2 transcriptional activity and mediates the IGF1/insulin-dependent BGLAP expression in osteoblasts Interacts with PPP2R1A; the interaction regulates the dephosphorylation of FOXO1 at Thr-24 and Ser-254 leading to its nuclear import. Interacts with NLK. Interacts with SIRT1; the interaction results in the deacetylation of FOXO1 leading to activation of FOXO1-mediated transcription of genes involved in DNA repair and stress resistance. Binds to CDK1. Interacts with the 14-3-3 proteins, YWHAG and YWHAZ; the interactions require insulin-stimulated phosphorylation on Thr-24, promote nuclear exit and loss of transcriptional activity. Interacts with SKP2; the interaction ubiquitinates FOXO1 leading to its proteasomal degradation. The interaction requires the presence of KRIT1. Interacts (via the C-terminal half) with ATF4 (via its DNA-binding domain); the interaction occurs in osteoblasts, regulates glucose homeostasis via suppression of beta-cell proliferation and subsequent decrease in insulin production. Interacts with PRMT1; the interaction methylates FOXO1, prevents PKB/AKT1 phosphorylation and retains FOXO1 in the nucleus. Interacts with EP300 and CREBBP; the interactions acetylate FOXO1. Interacts with SIRT2; the interaction is disrupted in response to oxidative stress or serum deprivation, leading to increased level of acetylated FOXO1, which promotes stress-induced autophagy by stimulating E1-like activating enzyme ATG7. Interacts (acetylated form) with ATG7; the interaction is increased in response to oxidative stress or serum deprivation and promotes the autophagic process leading to cell death. Interacts (acetylated form) with PPARG. Interacts with XBP1; this interaction is direct and leads to FOXO1 ubiquitination and degradation via the proteasome pathway. Interacts with WDFY2. Forms a complex with WDFY2 and AKT1 (By similarity). Interacts with CRY1 (By similarity). Interacts with PPIA/CYPA; the interaction promotes FOXO1 dephosphorylation, nuclear accumulation and transcriptional activity (By similarity). Interacts with TOX4; FOXO1 is required for full induction of TOX4-dependent activity and the interaction is inhibited by insulin (By similarity). Interacts (when phosphorylated on Ser-254) with STUB1/CHIP (By similarity).</text>
</comment>
<comment type="subcellular location">
    <subcellularLocation>
        <location evidence="5">Cytoplasm</location>
    </subcellularLocation>
    <subcellularLocation>
        <location evidence="5">Nucleus</location>
    </subcellularLocation>
    <text evidence="4 5">Shuttles between the cytoplasm and nucleus (By similarity). Largely nuclear in unstimulated cells (By similarity). In osteoblasts, colocalizes with ATF4 and RUNX2 in the nucleus. Serum deprivation increases localization to the nucleus, leading to activate expression of SOX9 and subsequent chondrogenesis (By similarity). Insulin-induced phosphorylation at Ser-253 by PKB/AKT1 leads, via stimulation of Thr-24 phosphorylation, to binding of 14-3-3 proteins and nuclear export to the cytoplasm where it is degraded by the ubiquitin-proteasomal pathway (By similarity). Phosphorylation at Ser-249 by CDK1 disrupts binding of 14-3-3 proteins and promotes nuclear accumulation (By similarity). Phosphorylation by NLK results in nuclear export (By similarity). Translocates to the nucleus upon oxidative stress-induced phosphorylation at Ser-212 by STK4/MST1 (By similarity). SGK1-mediated phosphorylation also results in nuclear translocation. Retained in the nucleus under stress stimuli including oxidative stress, nutrient deprivation or nitric oxide. Methylated form is nuclear (By similarity). PPIA/CYPA stimulates its nuclear accumulation (By similarity). Deacetylation by SIRT6, promotes its translocation into the cytoplasm (By similarity).</text>
</comment>
<comment type="PTM">
    <text evidence="4 5">Phosphorylation by NLK promotes nuclear export and inhibits the transcriptional activity. In response to growth factors, phosphorylation on Thr-24, Ser-254 and Ser-320 by PKB/AKT1 promotes nuclear export and inactivation of transactivational activity. Phosphorylation on Thr-24 is required for binding 14-3-3 proteins. Phosphorylation of Ser-254 decreases DNA-binding activity and promotes the phosphorylation of Thr-24 and Ser-317, permitting phosphorylation of Ser-320 and Ser-323, probably by CDK1, leading to nuclear exclusion and loss of function. Stress signals, such as response to oxygen or nitric oxide, attenuate the PKB/AKT1-mediated phosphorylation leading to nuclear retention. Phosphorylation of Ser-327 is independent of IGF1 and leads to reduced function. Dephosphorylated on Thr-24 and Ser-254 by PP2A in beta-cells under oxidative stress leading to nuclear retention. Phosphorylation of Ser-247 by CDK1 disrupts binding of 14-3-3 proteins leading to nuclear accumulation and has no effect on DNA binding nor transcriptional activity. Phosphorylation by STK4/MST1 on Ser-210, upon oxidative stress, inhibits binding to 14-3-3 proteins and nuclear export (By similarity). PPIA/CYPA promotes its dephosphorylation on Ser-254 (By similarity).</text>
</comment>
<comment type="PTM">
    <text evidence="4 5">Ubiquitinated by SKP2 (By similarity). Ubiquitination leads to proteasomal degradation (By similarity). Ubiquitinated by STUB1/CHIP; when Ser-254 is phosphorylated (By similarity).</text>
</comment>
<comment type="PTM">
    <text evidence="5">Methylation inhibits AKT1-mediated phosphorylation at Ser-254 and is increased by oxidative stress.</text>
</comment>
<comment type="PTM">
    <text evidence="4">Acetylated. Acetylation at Lys-260 and Lys-272 are necessary for autophagic cell death induction. Deacetylated by SIRT2 in response to oxidative stress or serum deprivation, thereby negatively regulating FOXO1-mediated autophagic cell death. Once in the nucleus, acetylated by CREBBP/EP300. Acetylation diminishes the interaction with target DNA and attenuates the transcriptional activity. It increases the phosphorylation at Ser-254. Deacetylation by SIRT1 results in reactivation of the transcriptional activity. Oxidative stress by hydrogen peroxide treatment appears to promote deacetylation and uncoupling of insulin-induced phosphorylation. By contrast, resveratrol acts independently of acetylation. Acetylated at Lys-421, promoting its localization to the nucleus and transcription factor activity. Deacetylation at Lys-421 by SIRT6, promotes its translocation into the cytoplasm, preventing its transcription factor activity. Deacetylation and subsequent inhibition by SIRT6 has different effects depending on cell types: it inhibits gluconeogenesis in hepatocytes, promotes glucose sensing in pancreatic beta-cells and regulates lipid catabolism in brown adipocytes.</text>
</comment>
<proteinExistence type="evidence at protein level"/>
<keyword id="KW-0007">Acetylation</keyword>
<keyword id="KW-0010">Activator</keyword>
<keyword id="KW-0053">Apoptosis</keyword>
<keyword id="KW-0072">Autophagy</keyword>
<keyword id="KW-0963">Cytoplasm</keyword>
<keyword id="KW-0221">Differentiation</keyword>
<keyword id="KW-0238">DNA-binding</keyword>
<keyword id="KW-0488">Methylation</keyword>
<keyword id="KW-0539">Nucleus</keyword>
<keyword id="KW-0597">Phosphoprotein</keyword>
<keyword id="KW-1185">Reference proteome</keyword>
<keyword id="KW-0804">Transcription</keyword>
<keyword id="KW-0805">Transcription regulation</keyword>
<keyword id="KW-0832">Ubl conjugation</keyword>
<name>FOXO1_ICTTR</name>
<gene>
    <name type="primary">FOXO1</name>
    <name type="synonym">FOXO1A</name>
</gene>
<sequence>MAEAPQVVEIDPDFEPLPRPRSCTWPLPRPEFSQSNSATSSPAPSGGATANPDASAGLPPASAAAVSADFMSNLSLLEESEDFPQAPGSVAAAVAAAAAAATGGLCGDFQGLEAGCLHPAPPQPPPPGPLSQHPPVPPAAGPLAGQPRKSSSSRRNAWGNLSYADLITKAIESSAEKRLTLSQIYEWMVKSVPYFKDKGDSNSSAGWKNSIRHNLSLHSKFIRVQNEGTGKSSWWMLNPEGGKSGKSPRRRAASMDNNSKFAKSRGQAAKKKASLQSGQEGAGDSPGSQFSKWPASPGSHSNDDFDNWSTFRPRTSSNASTISGRFSPIMTEQDDLGDGDVHSLVYPPSASKMASTLPSLSEISNPENMENLLDNLNLLSSPTSLTVSTQSSPGSMMQQTPCYSFAPPSTSLNSPSPNYQKYTYGQSSMSPLSQMPMQTLQDNKSSYGGLNQFNCAQGLLKELLTSDSPPHNDIMSSVDPGVAQPNSRVLGQNVMLGPNSVMPAYGNQASHNKMMNPSSHTHPGHAQQTSVVNGRALPHTVNTMPHTSGMNRLTPVKTPLQVPLLHHMQMSALGGYSSVSSCSGYGRMGVLHQEKLPSDLDGMFIERLDCDMESIIRNDLMDGDALDFNFDNVLPNQSFPHGVKTTTHSWVSG</sequence>
<evidence type="ECO:0000250" key="1"/>
<evidence type="ECO:0000250" key="2">
    <source>
        <dbReference type="UniProtKB" id="A4L7N3"/>
    </source>
</evidence>
<evidence type="ECO:0000250" key="3">
    <source>
        <dbReference type="UniProtKB" id="G3V7R4"/>
    </source>
</evidence>
<evidence type="ECO:0000250" key="4">
    <source>
        <dbReference type="UniProtKB" id="Q12778"/>
    </source>
</evidence>
<evidence type="ECO:0000250" key="5">
    <source>
        <dbReference type="UniProtKB" id="Q9R1E0"/>
    </source>
</evidence>
<evidence type="ECO:0000255" key="6">
    <source>
        <dbReference type="PROSITE-ProRule" id="PRU00089"/>
    </source>
</evidence>
<evidence type="ECO:0000256" key="7">
    <source>
        <dbReference type="SAM" id="MobiDB-lite"/>
    </source>
</evidence>
<protein>
    <recommendedName>
        <fullName>Forkhead box protein O1</fullName>
    </recommendedName>
    <alternativeName>
        <fullName>Forkhead box protein O1A</fullName>
    </alternativeName>
    <alternativeName>
        <fullName>Forkhead in rhabdomyosarcoma</fullName>
    </alternativeName>
</protein>
<feature type="chain" id="PRO_0000250522" description="Forkhead box protein O1">
    <location>
        <begin position="1"/>
        <end position="653"/>
    </location>
</feature>
<feature type="DNA-binding region" description="Fork-head" evidence="6">
    <location>
        <begin position="157"/>
        <end position="233"/>
    </location>
</feature>
<feature type="region of interest" description="Disordered" evidence="7">
    <location>
        <begin position="1"/>
        <end position="64"/>
    </location>
</feature>
<feature type="region of interest" description="Disordered" evidence="7">
    <location>
        <begin position="117"/>
        <end position="156"/>
    </location>
</feature>
<feature type="region of interest" description="DNA-binding" evidence="4">
    <location>
        <begin position="209"/>
        <end position="216"/>
    </location>
</feature>
<feature type="region of interest" description="Disordered" evidence="7">
    <location>
        <begin position="232"/>
        <end position="335"/>
    </location>
</feature>
<feature type="region of interest" description="DNA-binding" evidence="4">
    <location>
        <begin position="232"/>
        <end position="235"/>
    </location>
</feature>
<feature type="region of interest" description="Sufficient for interaction with NLK" evidence="5">
    <location>
        <begin position="281"/>
        <end position="561"/>
    </location>
</feature>
<feature type="region of interest" description="Required for interaction with RUNX2" evidence="5">
    <location>
        <begin position="361"/>
        <end position="457"/>
    </location>
</feature>
<feature type="short sequence motif" description="Nuclear localization signal" evidence="1">
    <location>
        <begin position="249"/>
        <end position="251"/>
    </location>
</feature>
<feature type="short sequence motif" description="Required for interaction with SIRT1" evidence="5">
    <location>
        <begin position="460"/>
        <end position="464"/>
    </location>
</feature>
<feature type="compositionally biased region" description="Low complexity" evidence="7">
    <location>
        <begin position="35"/>
        <end position="64"/>
    </location>
</feature>
<feature type="compositionally biased region" description="Pro residues" evidence="7">
    <location>
        <begin position="119"/>
        <end position="140"/>
    </location>
</feature>
<feature type="compositionally biased region" description="Polar residues" evidence="7">
    <location>
        <begin position="307"/>
        <end position="324"/>
    </location>
</feature>
<feature type="site" description="DNA-binding" evidence="4">
    <location>
        <position position="156"/>
    </location>
</feature>
<feature type="site" description="DNA-binding" evidence="4">
    <location>
        <position position="163"/>
    </location>
</feature>
<feature type="site" description="DNA-binding" evidence="4">
    <location>
        <position position="223"/>
    </location>
</feature>
<feature type="modified residue" description="Phosphothreonine; by PKB/AKT1 or PKB/AKT2 and SGK1" evidence="4">
    <location>
        <position position="24"/>
    </location>
</feature>
<feature type="modified residue" description="Phosphoserine; by STK4/MST1" evidence="4">
    <location>
        <position position="210"/>
    </location>
</feature>
<feature type="modified residue" description="Phosphoserine" evidence="4">
    <location>
        <position position="216"/>
    </location>
</feature>
<feature type="modified residue" description="Phosphoserine" evidence="4">
    <location>
        <position position="232"/>
    </location>
</feature>
<feature type="modified residue" description="Phosphoserine" evidence="4">
    <location>
        <position position="233"/>
    </location>
</feature>
<feature type="modified residue" description="N6-acetyllysine" evidence="5">
    <location>
        <position position="243"/>
    </location>
</feature>
<feature type="modified residue" description="N6-acetyllysine" evidence="5">
    <location>
        <position position="246"/>
    </location>
</feature>
<feature type="modified residue" description="Phosphoserine; by CDK1" evidence="4">
    <location>
        <position position="247"/>
    </location>
</feature>
<feature type="modified residue" description="Omega-N-methylarginine; by PRMT1" evidence="5">
    <location>
        <position position="249"/>
    </location>
</feature>
<feature type="modified residue" description="Omega-N-methylarginine; by PRMT1" evidence="5">
    <location>
        <position position="251"/>
    </location>
</feature>
<feature type="modified residue" description="Phosphoserine; by PKB/AKT1 and SGK1" evidence="4">
    <location>
        <position position="254"/>
    </location>
</feature>
<feature type="modified residue" description="N6-acetyllysine" evidence="4">
    <location>
        <position position="260"/>
    </location>
</feature>
<feature type="modified residue" description="N6-acetyllysine" evidence="4">
    <location>
        <position position="263"/>
    </location>
</feature>
<feature type="modified residue" description="N6-acetyllysine" evidence="4">
    <location>
        <position position="272"/>
    </location>
</feature>
<feature type="modified residue" description="Phosphoserine" evidence="4">
    <location>
        <position position="285"/>
    </location>
</feature>
<feature type="modified residue" description="Phosphoserine" evidence="5">
    <location>
        <position position="296"/>
    </location>
</feature>
<feature type="modified residue" description="Phosphoserine; by PKB/AKT1 or PKB/AKT2" evidence="5">
    <location>
        <position position="317"/>
    </location>
</feature>
<feature type="modified residue" description="Phosphoserine; by CK1 and SGK1" evidence="4">
    <location>
        <position position="320"/>
    </location>
</feature>
<feature type="modified residue" description="Phosphoserine" evidence="4">
    <location>
        <position position="323"/>
    </location>
</feature>
<feature type="modified residue" description="Phosphoserine; by DYRK1A" evidence="4">
    <location>
        <position position="327"/>
    </location>
</feature>
<feature type="modified residue" description="Phosphothreonine" evidence="5">
    <location>
        <position position="331"/>
    </location>
</feature>
<feature type="modified residue" description="N6-acetyllysine" evidence="4">
    <location>
        <position position="421"/>
    </location>
</feature>
<dbReference type="EMBL" id="AY255525">
    <property type="protein sequence ID" value="AAO72710.1"/>
    <property type="molecule type" value="mRNA"/>
</dbReference>
<dbReference type="RefSeq" id="NP_001269185.1">
    <property type="nucleotide sequence ID" value="NM_001282256.1"/>
</dbReference>
<dbReference type="SMR" id="Q810W5"/>
<dbReference type="FunCoup" id="Q810W5">
    <property type="interactions" value="3230"/>
</dbReference>
<dbReference type="STRING" id="43179.ENSSTOP00000008695"/>
<dbReference type="GeneID" id="101967490"/>
<dbReference type="KEGG" id="iti:101967490"/>
<dbReference type="CTD" id="2308"/>
<dbReference type="eggNOG" id="KOG2294">
    <property type="taxonomic scope" value="Eukaryota"/>
</dbReference>
<dbReference type="InParanoid" id="Q810W5"/>
<dbReference type="OrthoDB" id="5954824at2759"/>
<dbReference type="Proteomes" id="UP000005215">
    <property type="component" value="Unassembled WGS sequence"/>
</dbReference>
<dbReference type="GO" id="GO:0005737">
    <property type="term" value="C:cytoplasm"/>
    <property type="evidence" value="ECO:0000250"/>
    <property type="project" value="UniProtKB"/>
</dbReference>
<dbReference type="GO" id="GO:0005829">
    <property type="term" value="C:cytosol"/>
    <property type="evidence" value="ECO:0000250"/>
    <property type="project" value="UniProtKB"/>
</dbReference>
<dbReference type="GO" id="GO:0005739">
    <property type="term" value="C:mitochondrion"/>
    <property type="evidence" value="ECO:0000250"/>
    <property type="project" value="UniProtKB"/>
</dbReference>
<dbReference type="GO" id="GO:0005654">
    <property type="term" value="C:nucleoplasm"/>
    <property type="evidence" value="ECO:0007669"/>
    <property type="project" value="UniProtKB-ARBA"/>
</dbReference>
<dbReference type="GO" id="GO:0005634">
    <property type="term" value="C:nucleus"/>
    <property type="evidence" value="ECO:0000250"/>
    <property type="project" value="UniProtKB"/>
</dbReference>
<dbReference type="GO" id="GO:0003682">
    <property type="term" value="F:chromatin binding"/>
    <property type="evidence" value="ECO:0000250"/>
    <property type="project" value="UniProtKB"/>
</dbReference>
<dbReference type="GO" id="GO:0001228">
    <property type="term" value="F:DNA-binding transcription activator activity, RNA polymerase II-specific"/>
    <property type="evidence" value="ECO:0000250"/>
    <property type="project" value="UniProtKB"/>
</dbReference>
<dbReference type="GO" id="GO:0003700">
    <property type="term" value="F:DNA-binding transcription factor activity"/>
    <property type="evidence" value="ECO:0000250"/>
    <property type="project" value="UniProtKB"/>
</dbReference>
<dbReference type="GO" id="GO:0051721">
    <property type="term" value="F:protein phosphatase 2A binding"/>
    <property type="evidence" value="ECO:0000250"/>
    <property type="project" value="UniProtKB"/>
</dbReference>
<dbReference type="GO" id="GO:0000978">
    <property type="term" value="F:RNA polymerase II cis-regulatory region sequence-specific DNA binding"/>
    <property type="evidence" value="ECO:0007669"/>
    <property type="project" value="TreeGrafter"/>
</dbReference>
<dbReference type="GO" id="GO:0043565">
    <property type="term" value="F:sequence-specific DNA binding"/>
    <property type="evidence" value="ECO:0000250"/>
    <property type="project" value="UniProtKB"/>
</dbReference>
<dbReference type="GO" id="GO:0006915">
    <property type="term" value="P:apoptotic process"/>
    <property type="evidence" value="ECO:0000250"/>
    <property type="project" value="UniProtKB"/>
</dbReference>
<dbReference type="GO" id="GO:0006914">
    <property type="term" value="P:autophagy"/>
    <property type="evidence" value="ECO:0007669"/>
    <property type="project" value="UniProtKB-KW"/>
</dbReference>
<dbReference type="GO" id="GO:0070417">
    <property type="term" value="P:cellular response to cold"/>
    <property type="evidence" value="ECO:0000250"/>
    <property type="project" value="UniProtKB"/>
</dbReference>
<dbReference type="GO" id="GO:0071455">
    <property type="term" value="P:cellular response to hyperoxia"/>
    <property type="evidence" value="ECO:0000250"/>
    <property type="project" value="UniProtKB"/>
</dbReference>
<dbReference type="GO" id="GO:0071732">
    <property type="term" value="P:cellular response to nitric oxide"/>
    <property type="evidence" value="ECO:0000250"/>
    <property type="project" value="UniProtKB"/>
</dbReference>
<dbReference type="GO" id="GO:0034599">
    <property type="term" value="P:cellular response to oxidative stress"/>
    <property type="evidence" value="ECO:0000250"/>
    <property type="project" value="UniProtKB"/>
</dbReference>
<dbReference type="GO" id="GO:0009267">
    <property type="term" value="P:cellular response to starvation"/>
    <property type="evidence" value="ECO:0000250"/>
    <property type="project" value="UniProtKB"/>
</dbReference>
<dbReference type="GO" id="GO:0006974">
    <property type="term" value="P:DNA damage response"/>
    <property type="evidence" value="ECO:0000250"/>
    <property type="project" value="UniProtKB"/>
</dbReference>
<dbReference type="GO" id="GO:0097009">
    <property type="term" value="P:energy homeostasis"/>
    <property type="evidence" value="ECO:0000250"/>
    <property type="project" value="UniProtKB"/>
</dbReference>
<dbReference type="GO" id="GO:0045444">
    <property type="term" value="P:fat cell differentiation"/>
    <property type="evidence" value="ECO:0000250"/>
    <property type="project" value="UniProtKB"/>
</dbReference>
<dbReference type="GO" id="GO:0008286">
    <property type="term" value="P:insulin receptor signaling pathway"/>
    <property type="evidence" value="ECO:0000250"/>
    <property type="project" value="UniProtKB"/>
</dbReference>
<dbReference type="GO" id="GO:0001678">
    <property type="term" value="P:intracellular glucose homeostasis"/>
    <property type="evidence" value="ECO:0000250"/>
    <property type="project" value="UniProtKB"/>
</dbReference>
<dbReference type="GO" id="GO:0043066">
    <property type="term" value="P:negative regulation of apoptotic process"/>
    <property type="evidence" value="ECO:0000250"/>
    <property type="project" value="UniProtKB"/>
</dbReference>
<dbReference type="GO" id="GO:0045892">
    <property type="term" value="P:negative regulation of DNA-templated transcription"/>
    <property type="evidence" value="ECO:0000250"/>
    <property type="project" value="UniProtKB"/>
</dbReference>
<dbReference type="GO" id="GO:0045599">
    <property type="term" value="P:negative regulation of fat cell differentiation"/>
    <property type="evidence" value="ECO:0000250"/>
    <property type="project" value="UniProtKB"/>
</dbReference>
<dbReference type="GO" id="GO:0046676">
    <property type="term" value="P:negative regulation of insulin secretion"/>
    <property type="evidence" value="ECO:0000250"/>
    <property type="project" value="UniProtKB"/>
</dbReference>
<dbReference type="GO" id="GO:0043065">
    <property type="term" value="P:positive regulation of apoptotic process"/>
    <property type="evidence" value="ECO:0000250"/>
    <property type="project" value="UniProtKB"/>
</dbReference>
<dbReference type="GO" id="GO:0010508">
    <property type="term" value="P:positive regulation of autophagy"/>
    <property type="evidence" value="ECO:0000250"/>
    <property type="project" value="UniProtKB"/>
</dbReference>
<dbReference type="GO" id="GO:0045893">
    <property type="term" value="P:positive regulation of DNA-templated transcription"/>
    <property type="evidence" value="ECO:0000250"/>
    <property type="project" value="UniProtKB"/>
</dbReference>
<dbReference type="GO" id="GO:0045722">
    <property type="term" value="P:positive regulation of gluconeogenesis"/>
    <property type="evidence" value="ECO:0000250"/>
    <property type="project" value="UniProtKB"/>
</dbReference>
<dbReference type="GO" id="GO:0045732">
    <property type="term" value="P:positive regulation of protein catabolic process"/>
    <property type="evidence" value="ECO:0000250"/>
    <property type="project" value="UniProtKB"/>
</dbReference>
<dbReference type="GO" id="GO:0034393">
    <property type="term" value="P:positive regulation of smooth muscle cell apoptotic process"/>
    <property type="evidence" value="ECO:0000250"/>
    <property type="project" value="UniProtKB"/>
</dbReference>
<dbReference type="GO" id="GO:0045944">
    <property type="term" value="P:positive regulation of transcription by RNA polymerase II"/>
    <property type="evidence" value="ECO:0000250"/>
    <property type="project" value="UniProtKB"/>
</dbReference>
<dbReference type="GO" id="GO:0006473">
    <property type="term" value="P:protein acetylation"/>
    <property type="evidence" value="ECO:0000250"/>
    <property type="project" value="UniProtKB"/>
</dbReference>
<dbReference type="GO" id="GO:0060260">
    <property type="term" value="P:regulation of transcription initiation by RNA polymerase II"/>
    <property type="evidence" value="ECO:0000250"/>
    <property type="project" value="UniProtKB"/>
</dbReference>
<dbReference type="GO" id="GO:0070542">
    <property type="term" value="P:response to fatty acid"/>
    <property type="evidence" value="ECO:0000250"/>
    <property type="project" value="UniProtKB"/>
</dbReference>
<dbReference type="GO" id="GO:0001659">
    <property type="term" value="P:temperature homeostasis"/>
    <property type="evidence" value="ECO:0000250"/>
    <property type="project" value="UniProtKB"/>
</dbReference>
<dbReference type="CDD" id="cd20060">
    <property type="entry name" value="FH_FOXO1"/>
    <property type="match status" value="1"/>
</dbReference>
<dbReference type="FunFam" id="1.10.10.10:FF:000032">
    <property type="entry name" value="Forkhead box protein O4"/>
    <property type="match status" value="1"/>
</dbReference>
<dbReference type="Gene3D" id="1.10.10.10">
    <property type="entry name" value="Winged helix-like DNA-binding domain superfamily/Winged helix DNA-binding domain"/>
    <property type="match status" value="1"/>
</dbReference>
<dbReference type="InterPro" id="IPR047408">
    <property type="entry name" value="FH_FOXO1"/>
</dbReference>
<dbReference type="InterPro" id="IPR001766">
    <property type="entry name" value="Fork_head_dom"/>
</dbReference>
<dbReference type="InterPro" id="IPR032067">
    <property type="entry name" value="FOXO-TAD"/>
</dbReference>
<dbReference type="InterPro" id="IPR032068">
    <property type="entry name" value="FOXO_KIX-bd"/>
</dbReference>
<dbReference type="InterPro" id="IPR030456">
    <property type="entry name" value="TF_fork_head_CS_2"/>
</dbReference>
<dbReference type="InterPro" id="IPR036388">
    <property type="entry name" value="WH-like_DNA-bd_sf"/>
</dbReference>
<dbReference type="InterPro" id="IPR036390">
    <property type="entry name" value="WH_DNA-bd_sf"/>
</dbReference>
<dbReference type="PANTHER" id="PTHR45767">
    <property type="entry name" value="FORKHEAD BOX PROTEIN O"/>
    <property type="match status" value="1"/>
</dbReference>
<dbReference type="PANTHER" id="PTHR45767:SF1">
    <property type="entry name" value="FORKHEAD BOX PROTEIN O1"/>
    <property type="match status" value="1"/>
</dbReference>
<dbReference type="Pfam" id="PF00250">
    <property type="entry name" value="Forkhead"/>
    <property type="match status" value="1"/>
</dbReference>
<dbReference type="Pfam" id="PF16676">
    <property type="entry name" value="FOXO-TAD"/>
    <property type="match status" value="1"/>
</dbReference>
<dbReference type="Pfam" id="PF16675">
    <property type="entry name" value="FOXO_KIX_bdg"/>
    <property type="match status" value="1"/>
</dbReference>
<dbReference type="PRINTS" id="PR00053">
    <property type="entry name" value="FORKHEAD"/>
</dbReference>
<dbReference type="SMART" id="SM00339">
    <property type="entry name" value="FH"/>
    <property type="match status" value="1"/>
</dbReference>
<dbReference type="SUPFAM" id="SSF46785">
    <property type="entry name" value="Winged helix' DNA-binding domain"/>
    <property type="match status" value="1"/>
</dbReference>
<dbReference type="PROSITE" id="PS00658">
    <property type="entry name" value="FORK_HEAD_2"/>
    <property type="match status" value="1"/>
</dbReference>
<dbReference type="PROSITE" id="PS50039">
    <property type="entry name" value="FORK_HEAD_3"/>
    <property type="match status" value="1"/>
</dbReference>
<reference key="1">
    <citation type="journal article" date="2004" name="Gene">
        <title>Cloning and characterization of a forkhead transcription factor gene, FoxO1a, from thirteen-lined ground squirrel.</title>
        <authorList>
            <person name="Cai D."/>
            <person name="McCarron R.M."/>
            <person name="Hallenbeck J."/>
        </authorList>
    </citation>
    <scope>NUCLEOTIDE SEQUENCE [MRNA]</scope>
    <scope>PHOSPHORYLATION</scope>
    <source>
        <tissue>Brain</tissue>
    </source>
</reference>
<accession>Q810W5</accession>